<gene>
    <name evidence="1" type="primary">metN2</name>
    <name type="ordered locus">PA14_72620</name>
</gene>
<comment type="function">
    <text evidence="1">Part of the ABC transporter complex MetNIQ involved in methionine import. Responsible for energy coupling to the transport system.</text>
</comment>
<comment type="catalytic activity">
    <reaction evidence="1">
        <text>L-methionine(out) + ATP + H2O = L-methionine(in) + ADP + phosphate + H(+)</text>
        <dbReference type="Rhea" id="RHEA:29779"/>
        <dbReference type="ChEBI" id="CHEBI:15377"/>
        <dbReference type="ChEBI" id="CHEBI:15378"/>
        <dbReference type="ChEBI" id="CHEBI:30616"/>
        <dbReference type="ChEBI" id="CHEBI:43474"/>
        <dbReference type="ChEBI" id="CHEBI:57844"/>
        <dbReference type="ChEBI" id="CHEBI:456216"/>
        <dbReference type="EC" id="7.4.2.11"/>
    </reaction>
</comment>
<comment type="catalytic activity">
    <reaction evidence="1">
        <text>D-methionine(out) + ATP + H2O = D-methionine(in) + ADP + phosphate + H(+)</text>
        <dbReference type="Rhea" id="RHEA:29767"/>
        <dbReference type="ChEBI" id="CHEBI:15377"/>
        <dbReference type="ChEBI" id="CHEBI:15378"/>
        <dbReference type="ChEBI" id="CHEBI:30616"/>
        <dbReference type="ChEBI" id="CHEBI:43474"/>
        <dbReference type="ChEBI" id="CHEBI:57932"/>
        <dbReference type="ChEBI" id="CHEBI:456216"/>
        <dbReference type="EC" id="7.4.2.11"/>
    </reaction>
</comment>
<comment type="subunit">
    <text evidence="1">The complex is composed of two ATP-binding proteins (MetN), two transmembrane proteins (MetI) and a solute-binding protein (MetQ).</text>
</comment>
<comment type="subcellular location">
    <subcellularLocation>
        <location evidence="1">Cell inner membrane</location>
        <topology evidence="1">Peripheral membrane protein</topology>
    </subcellularLocation>
</comment>
<comment type="similarity">
    <text evidence="1">Belongs to the ABC transporter superfamily. Methionine importer (TC 3.A.1.24) family.</text>
</comment>
<sequence length="335" mass="36759">MIEFHDVHKTYRVAGREIPALQPTRLNIQAGQIFGLIGHSGAGKSTLLRLINRLEEPSGGRILVEGEDVTALDAEGLRRFRQRVGMIFQHFNLLSSKTVADNIAMPLRLAGGFSRAEVDARVSELLARVGLSDHARKYPAQLSGGQKQRVGIARALACRPSILLCDEATSALDPQTTASVLQLLAEINRELKLTIVLITHEMDVIRRVCDQVAVMDGGAIVEQGDVADVFLHPQHPTTRRFVFEAERVDEDERHDDFAHVPGLILRLTFRGEATYAPLLGTVARQTGVDYSILSGRIDRIKDTPYGQLTLALVGGDLEAAMSQLNAADVHVEVLR</sequence>
<name>METN2_PSEAB</name>
<protein>
    <recommendedName>
        <fullName evidence="1">Methionine import ATP-binding protein MetN 2</fullName>
        <ecNumber evidence="1">7.4.2.11</ecNumber>
    </recommendedName>
</protein>
<organism>
    <name type="scientific">Pseudomonas aeruginosa (strain UCBPP-PA14)</name>
    <dbReference type="NCBI Taxonomy" id="208963"/>
    <lineage>
        <taxon>Bacteria</taxon>
        <taxon>Pseudomonadati</taxon>
        <taxon>Pseudomonadota</taxon>
        <taxon>Gammaproteobacteria</taxon>
        <taxon>Pseudomonadales</taxon>
        <taxon>Pseudomonadaceae</taxon>
        <taxon>Pseudomonas</taxon>
    </lineage>
</organism>
<accession>Q02DK6</accession>
<reference key="1">
    <citation type="journal article" date="2006" name="Genome Biol.">
        <title>Genomic analysis reveals that Pseudomonas aeruginosa virulence is combinatorial.</title>
        <authorList>
            <person name="Lee D.G."/>
            <person name="Urbach J.M."/>
            <person name="Wu G."/>
            <person name="Liberati N.T."/>
            <person name="Feinbaum R.L."/>
            <person name="Miyata S."/>
            <person name="Diggins L.T."/>
            <person name="He J."/>
            <person name="Saucier M."/>
            <person name="Deziel E."/>
            <person name="Friedman L."/>
            <person name="Li L."/>
            <person name="Grills G."/>
            <person name="Montgomery K."/>
            <person name="Kucherlapati R."/>
            <person name="Rahme L.G."/>
            <person name="Ausubel F.M."/>
        </authorList>
    </citation>
    <scope>NUCLEOTIDE SEQUENCE [LARGE SCALE GENOMIC DNA]</scope>
    <source>
        <strain>UCBPP-PA14</strain>
    </source>
</reference>
<feature type="chain" id="PRO_0000277690" description="Methionine import ATP-binding protein MetN 2">
    <location>
        <begin position="1"/>
        <end position="335"/>
    </location>
</feature>
<feature type="domain" description="ABC transporter" evidence="1">
    <location>
        <begin position="2"/>
        <end position="242"/>
    </location>
</feature>
<feature type="binding site" evidence="1">
    <location>
        <begin position="38"/>
        <end position="45"/>
    </location>
    <ligand>
        <name>ATP</name>
        <dbReference type="ChEBI" id="CHEBI:30616"/>
    </ligand>
</feature>
<dbReference type="EC" id="7.4.2.11" evidence="1"/>
<dbReference type="EMBL" id="CP000438">
    <property type="protein sequence ID" value="ABJ14889.1"/>
    <property type="molecule type" value="Genomic_DNA"/>
</dbReference>
<dbReference type="RefSeq" id="WP_003097002.1">
    <property type="nucleotide sequence ID" value="NZ_CP034244.1"/>
</dbReference>
<dbReference type="SMR" id="Q02DK6"/>
<dbReference type="KEGG" id="pau:PA14_72620"/>
<dbReference type="PseudoCAP" id="PA14_72620"/>
<dbReference type="HOGENOM" id="CLU_000604_1_3_6"/>
<dbReference type="BioCyc" id="PAER208963:G1G74-6109-MONOMER"/>
<dbReference type="Proteomes" id="UP000000653">
    <property type="component" value="Chromosome"/>
</dbReference>
<dbReference type="GO" id="GO:0005886">
    <property type="term" value="C:plasma membrane"/>
    <property type="evidence" value="ECO:0007669"/>
    <property type="project" value="UniProtKB-SubCell"/>
</dbReference>
<dbReference type="GO" id="GO:0033232">
    <property type="term" value="F:ABC-type D-methionine transporter activity"/>
    <property type="evidence" value="ECO:0007669"/>
    <property type="project" value="UniProtKB-EC"/>
</dbReference>
<dbReference type="GO" id="GO:0005524">
    <property type="term" value="F:ATP binding"/>
    <property type="evidence" value="ECO:0007669"/>
    <property type="project" value="UniProtKB-KW"/>
</dbReference>
<dbReference type="GO" id="GO:0016887">
    <property type="term" value="F:ATP hydrolysis activity"/>
    <property type="evidence" value="ECO:0007669"/>
    <property type="project" value="InterPro"/>
</dbReference>
<dbReference type="CDD" id="cd03258">
    <property type="entry name" value="ABC_MetN_methionine_transporter"/>
    <property type="match status" value="1"/>
</dbReference>
<dbReference type="FunFam" id="3.40.50.300:FF:000056">
    <property type="entry name" value="Cell division ATP-binding protein FtsE"/>
    <property type="match status" value="1"/>
</dbReference>
<dbReference type="Gene3D" id="3.30.70.260">
    <property type="match status" value="1"/>
</dbReference>
<dbReference type="Gene3D" id="3.40.50.300">
    <property type="entry name" value="P-loop containing nucleotide triphosphate hydrolases"/>
    <property type="match status" value="1"/>
</dbReference>
<dbReference type="InterPro" id="IPR003593">
    <property type="entry name" value="AAA+_ATPase"/>
</dbReference>
<dbReference type="InterPro" id="IPR003439">
    <property type="entry name" value="ABC_transporter-like_ATP-bd"/>
</dbReference>
<dbReference type="InterPro" id="IPR017871">
    <property type="entry name" value="ABC_transporter-like_CS"/>
</dbReference>
<dbReference type="InterPro" id="IPR045865">
    <property type="entry name" value="ACT-like_dom_sf"/>
</dbReference>
<dbReference type="InterPro" id="IPR041701">
    <property type="entry name" value="MetN_ABC"/>
</dbReference>
<dbReference type="InterPro" id="IPR050086">
    <property type="entry name" value="MetN_ABC_transporter-like"/>
</dbReference>
<dbReference type="InterPro" id="IPR018449">
    <property type="entry name" value="NIL_domain"/>
</dbReference>
<dbReference type="InterPro" id="IPR027417">
    <property type="entry name" value="P-loop_NTPase"/>
</dbReference>
<dbReference type="PANTHER" id="PTHR43166">
    <property type="entry name" value="AMINO ACID IMPORT ATP-BINDING PROTEIN"/>
    <property type="match status" value="1"/>
</dbReference>
<dbReference type="PANTHER" id="PTHR43166:SF30">
    <property type="entry name" value="METHIONINE IMPORT ATP-BINDING PROTEIN METN"/>
    <property type="match status" value="1"/>
</dbReference>
<dbReference type="Pfam" id="PF00005">
    <property type="entry name" value="ABC_tran"/>
    <property type="match status" value="1"/>
</dbReference>
<dbReference type="Pfam" id="PF09383">
    <property type="entry name" value="NIL"/>
    <property type="match status" value="1"/>
</dbReference>
<dbReference type="SMART" id="SM00382">
    <property type="entry name" value="AAA"/>
    <property type="match status" value="1"/>
</dbReference>
<dbReference type="SMART" id="SM00930">
    <property type="entry name" value="NIL"/>
    <property type="match status" value="1"/>
</dbReference>
<dbReference type="SUPFAM" id="SSF55021">
    <property type="entry name" value="ACT-like"/>
    <property type="match status" value="1"/>
</dbReference>
<dbReference type="SUPFAM" id="SSF52540">
    <property type="entry name" value="P-loop containing nucleoside triphosphate hydrolases"/>
    <property type="match status" value="1"/>
</dbReference>
<dbReference type="PROSITE" id="PS00211">
    <property type="entry name" value="ABC_TRANSPORTER_1"/>
    <property type="match status" value="1"/>
</dbReference>
<dbReference type="PROSITE" id="PS50893">
    <property type="entry name" value="ABC_TRANSPORTER_2"/>
    <property type="match status" value="1"/>
</dbReference>
<dbReference type="PROSITE" id="PS51264">
    <property type="entry name" value="METN"/>
    <property type="match status" value="1"/>
</dbReference>
<keyword id="KW-0029">Amino-acid transport</keyword>
<keyword id="KW-0067">ATP-binding</keyword>
<keyword id="KW-0997">Cell inner membrane</keyword>
<keyword id="KW-1003">Cell membrane</keyword>
<keyword id="KW-0472">Membrane</keyword>
<keyword id="KW-0547">Nucleotide-binding</keyword>
<keyword id="KW-1278">Translocase</keyword>
<keyword id="KW-0813">Transport</keyword>
<evidence type="ECO:0000255" key="1">
    <source>
        <dbReference type="HAMAP-Rule" id="MF_01719"/>
    </source>
</evidence>
<proteinExistence type="inferred from homology"/>